<evidence type="ECO:0000255" key="1">
    <source>
        <dbReference type="HAMAP-Rule" id="MF_00503"/>
    </source>
</evidence>
<evidence type="ECO:0000305" key="2"/>
<dbReference type="EMBL" id="CP000284">
    <property type="protein sequence ID" value="ABE49597.1"/>
    <property type="molecule type" value="Genomic_DNA"/>
</dbReference>
<dbReference type="RefSeq" id="WP_011479551.1">
    <property type="nucleotide sequence ID" value="NC_007947.1"/>
</dbReference>
<dbReference type="SMR" id="Q1H1P0"/>
<dbReference type="STRING" id="265072.Mfla_1329"/>
<dbReference type="KEGG" id="mfa:Mfla_1329"/>
<dbReference type="eggNOG" id="COG0359">
    <property type="taxonomic scope" value="Bacteria"/>
</dbReference>
<dbReference type="HOGENOM" id="CLU_078938_4_1_4"/>
<dbReference type="OrthoDB" id="9788336at2"/>
<dbReference type="Proteomes" id="UP000002440">
    <property type="component" value="Chromosome"/>
</dbReference>
<dbReference type="GO" id="GO:1990904">
    <property type="term" value="C:ribonucleoprotein complex"/>
    <property type="evidence" value="ECO:0007669"/>
    <property type="project" value="UniProtKB-KW"/>
</dbReference>
<dbReference type="GO" id="GO:0005840">
    <property type="term" value="C:ribosome"/>
    <property type="evidence" value="ECO:0007669"/>
    <property type="project" value="UniProtKB-KW"/>
</dbReference>
<dbReference type="GO" id="GO:0019843">
    <property type="term" value="F:rRNA binding"/>
    <property type="evidence" value="ECO:0007669"/>
    <property type="project" value="UniProtKB-UniRule"/>
</dbReference>
<dbReference type="GO" id="GO:0003735">
    <property type="term" value="F:structural constituent of ribosome"/>
    <property type="evidence" value="ECO:0007669"/>
    <property type="project" value="InterPro"/>
</dbReference>
<dbReference type="GO" id="GO:0006412">
    <property type="term" value="P:translation"/>
    <property type="evidence" value="ECO:0007669"/>
    <property type="project" value="UniProtKB-UniRule"/>
</dbReference>
<dbReference type="Gene3D" id="3.10.430.100">
    <property type="entry name" value="Ribosomal protein L9, C-terminal domain"/>
    <property type="match status" value="1"/>
</dbReference>
<dbReference type="Gene3D" id="3.40.5.10">
    <property type="entry name" value="Ribosomal protein L9, N-terminal domain"/>
    <property type="match status" value="1"/>
</dbReference>
<dbReference type="HAMAP" id="MF_00503">
    <property type="entry name" value="Ribosomal_bL9"/>
    <property type="match status" value="1"/>
</dbReference>
<dbReference type="InterPro" id="IPR000244">
    <property type="entry name" value="Ribosomal_bL9"/>
</dbReference>
<dbReference type="InterPro" id="IPR009027">
    <property type="entry name" value="Ribosomal_bL9/RNase_H1_N"/>
</dbReference>
<dbReference type="InterPro" id="IPR020594">
    <property type="entry name" value="Ribosomal_bL9_bac/chp"/>
</dbReference>
<dbReference type="InterPro" id="IPR020069">
    <property type="entry name" value="Ribosomal_bL9_C"/>
</dbReference>
<dbReference type="InterPro" id="IPR036791">
    <property type="entry name" value="Ribosomal_bL9_C_sf"/>
</dbReference>
<dbReference type="InterPro" id="IPR020070">
    <property type="entry name" value="Ribosomal_bL9_N"/>
</dbReference>
<dbReference type="InterPro" id="IPR036935">
    <property type="entry name" value="Ribosomal_bL9_N_sf"/>
</dbReference>
<dbReference type="NCBIfam" id="TIGR00158">
    <property type="entry name" value="L9"/>
    <property type="match status" value="1"/>
</dbReference>
<dbReference type="PANTHER" id="PTHR21368">
    <property type="entry name" value="50S RIBOSOMAL PROTEIN L9"/>
    <property type="match status" value="1"/>
</dbReference>
<dbReference type="Pfam" id="PF03948">
    <property type="entry name" value="Ribosomal_L9_C"/>
    <property type="match status" value="1"/>
</dbReference>
<dbReference type="Pfam" id="PF01281">
    <property type="entry name" value="Ribosomal_L9_N"/>
    <property type="match status" value="1"/>
</dbReference>
<dbReference type="SUPFAM" id="SSF55658">
    <property type="entry name" value="L9 N-domain-like"/>
    <property type="match status" value="1"/>
</dbReference>
<dbReference type="SUPFAM" id="SSF55653">
    <property type="entry name" value="Ribosomal protein L9 C-domain"/>
    <property type="match status" value="1"/>
</dbReference>
<dbReference type="PROSITE" id="PS00651">
    <property type="entry name" value="RIBOSOMAL_L9"/>
    <property type="match status" value="1"/>
</dbReference>
<feature type="chain" id="PRO_0000258466" description="Large ribosomal subunit protein bL9">
    <location>
        <begin position="1"/>
        <end position="148"/>
    </location>
</feature>
<protein>
    <recommendedName>
        <fullName evidence="1">Large ribosomal subunit protein bL9</fullName>
    </recommendedName>
    <alternativeName>
        <fullName evidence="2">50S ribosomal protein L9</fullName>
    </alternativeName>
</protein>
<proteinExistence type="inferred from homology"/>
<keyword id="KW-1185">Reference proteome</keyword>
<keyword id="KW-0687">Ribonucleoprotein</keyword>
<keyword id="KW-0689">Ribosomal protein</keyword>
<keyword id="KW-0694">RNA-binding</keyword>
<keyword id="KW-0699">rRNA-binding</keyword>
<comment type="function">
    <text evidence="1">Binds to the 23S rRNA.</text>
</comment>
<comment type="similarity">
    <text evidence="1">Belongs to the bacterial ribosomal protein bL9 family.</text>
</comment>
<organism>
    <name type="scientific">Methylobacillus flagellatus (strain ATCC 51484 / DSM 6875 / VKM B-1610 / KT)</name>
    <dbReference type="NCBI Taxonomy" id="265072"/>
    <lineage>
        <taxon>Bacteria</taxon>
        <taxon>Pseudomonadati</taxon>
        <taxon>Pseudomonadota</taxon>
        <taxon>Betaproteobacteria</taxon>
        <taxon>Nitrosomonadales</taxon>
        <taxon>Methylophilaceae</taxon>
        <taxon>Methylobacillus</taxon>
    </lineage>
</organism>
<name>RL9_METFK</name>
<gene>
    <name evidence="1" type="primary">rplI</name>
    <name type="ordered locus">Mfla_1329</name>
</gene>
<accession>Q1H1P0</accession>
<sequence>MQVILLEKVVNLGNLGDIVKVKDGYGRNFLIPQGKAKRATEANKAEFEARRAELEKQQAEQLAAAQKRGEKLAGFMLQVTQKAGVDGRLFGSVTNGDIAEALTAQGFEVSKSEVRLPEGPLKAIGDYQVHIALHHDVVVEITVSVLGE</sequence>
<reference key="1">
    <citation type="submission" date="2006-03" db="EMBL/GenBank/DDBJ databases">
        <title>Complete sequence of Methylobacillus flagellatus KT.</title>
        <authorList>
            <consortium name="US DOE Joint Genome Institute"/>
            <person name="Copeland A."/>
            <person name="Lucas S."/>
            <person name="Lapidus A."/>
            <person name="Barry K."/>
            <person name="Detter J.C."/>
            <person name="Glavina del Rio T."/>
            <person name="Hammon N."/>
            <person name="Israni S."/>
            <person name="Dalin E."/>
            <person name="Tice H."/>
            <person name="Pitluck S."/>
            <person name="Brettin T."/>
            <person name="Bruce D."/>
            <person name="Han C."/>
            <person name="Tapia R."/>
            <person name="Saunders E."/>
            <person name="Gilna P."/>
            <person name="Schmutz J."/>
            <person name="Larimer F."/>
            <person name="Land M."/>
            <person name="Kyrpides N."/>
            <person name="Anderson I."/>
            <person name="Richardson P."/>
        </authorList>
    </citation>
    <scope>NUCLEOTIDE SEQUENCE [LARGE SCALE GENOMIC DNA]</scope>
    <source>
        <strain>ATCC 51484 / DSM 6875 / VKM B-1610 / KT</strain>
    </source>
</reference>